<reference key="1">
    <citation type="journal article" date="1992" name="Biochim. Biophys. Acta">
        <title>Nucleotide sequence of the genome of the bacteriophage alpha 3: interrelationship of the genome structure and the gene products with those of the phages, phi X174, G4 and phi K.</title>
        <authorList>
            <person name="Kodaira K."/>
            <person name="Nakano K."/>
            <person name="Okada S."/>
            <person name="Taketo A."/>
        </authorList>
    </citation>
    <scope>NUCLEOTIDE SEQUENCE [GENOMIC DNA]</scope>
</reference>
<reference key="2">
    <citation type="journal article" date="1984" name="Mol. Gen. Genet.">
        <title>Isolation and some properties of bacteriophage alpha3 gene J mutant.</title>
        <authorList>
            <person name="Kodaira K."/>
            <person name="Taketo A."/>
        </authorList>
    </citation>
    <scope>NUCLEOTIDE SEQUENCE [GENOMIC DNA] OF 114-150</scope>
</reference>
<proteinExistence type="inferred from homology"/>
<comment type="function">
    <text evidence="1">Assembles the procapsid by joining twelve 12S pre-assembly complex into a T=1 icosahedral particle, called 108S procapsid. Ten proteins D bind each 12S complex, which are formed by three pentamers of F, G, B protein and a H protein. The scaffolding protein is released from the provirion after genome packaging to form the mature virion.</text>
</comment>
<comment type="subunit">
    <text evidence="1">Component of the procapsid particle composed of 60 copies of the internally located B, 240 copies of the external scaffolding protein D, 60 copies of each of the viral structural proteins F and G, and 12 copies of protein H.</text>
</comment>
<comment type="subcellular location">
    <subcellularLocation>
        <location evidence="1">Host cytoplasm</location>
    </subcellularLocation>
</comment>
<comment type="similarity">
    <text evidence="2">Belongs to the microvirus D protein family.</text>
</comment>
<protein>
    <recommendedName>
        <fullName>External scaffolding protein D</fullName>
    </recommendedName>
    <alternativeName>
        <fullName>Scaffolding protein D</fullName>
        <shortName>GPD</shortName>
    </alternativeName>
</protein>
<keyword id="KW-1035">Host cytoplasm</keyword>
<keyword id="KW-1185">Reference proteome</keyword>
<keyword id="KW-0118">Viral capsid assembly</keyword>
<keyword id="KW-1188">Viral release from host cell</keyword>
<accession>P08765</accession>
<feature type="initiator methionine" description="Removed; by host" evidence="1">
    <location>
        <position position="1"/>
    </location>
</feature>
<feature type="chain" id="PRO_0000164877" description="External scaffolding protein D" evidence="1">
    <location>
        <begin position="2"/>
        <end position="150"/>
    </location>
</feature>
<feature type="sequence conflict" description="In Ref. 2; CAA25348." evidence="2" ref="2">
    <original>LFA</original>
    <variation>PLR</variation>
    <location>
        <begin position="118"/>
        <end position="120"/>
    </location>
</feature>
<name>SCAFD_BPAL3</name>
<organismHost>
    <name type="scientific">Escherichia coli</name>
    <dbReference type="NCBI Taxonomy" id="562"/>
</organismHost>
<sequence>MNIVSDVNYATSVAALRMLQASAVLDVTEEDFDFLTGDKIWIATDRNRARRCVEACVYGTLDFVGYPRFPAPVEFIAAVIAYYVHPVNVQTACLVMEGAEFSENIINGVERPVNAAELFAYTLRIKAGFKETVMDAEENARQKLRANGLK</sequence>
<evidence type="ECO:0000250" key="1">
    <source>
        <dbReference type="UniProtKB" id="P69486"/>
    </source>
</evidence>
<evidence type="ECO:0000305" key="2"/>
<dbReference type="EMBL" id="X60322">
    <property type="protein sequence ID" value="CAA42878.1"/>
    <property type="molecule type" value="Genomic_DNA"/>
</dbReference>
<dbReference type="EMBL" id="X00774">
    <property type="protein sequence ID" value="CAA25348.1"/>
    <property type="molecule type" value="Genomic_DNA"/>
</dbReference>
<dbReference type="PIR" id="S22328">
    <property type="entry name" value="S22328"/>
</dbReference>
<dbReference type="RefSeq" id="NP_039594.1">
    <property type="nucleotide sequence ID" value="NC_001330.1"/>
</dbReference>
<dbReference type="SMR" id="P08765"/>
<dbReference type="GeneID" id="1260694"/>
<dbReference type="KEGG" id="vg:1260694"/>
<dbReference type="OrthoDB" id="12694at10239"/>
<dbReference type="Proteomes" id="UP000002137">
    <property type="component" value="Genome"/>
</dbReference>
<dbReference type="GO" id="GO:0030430">
    <property type="term" value="C:host cell cytoplasm"/>
    <property type="evidence" value="ECO:0007669"/>
    <property type="project" value="UniProtKB-SubCell"/>
</dbReference>
<dbReference type="GO" id="GO:0046797">
    <property type="term" value="P:viral procapsid maturation"/>
    <property type="evidence" value="ECO:0007669"/>
    <property type="project" value="InterPro"/>
</dbReference>
<dbReference type="Gene3D" id="1.10.1850.10">
    <property type="entry name" value="Scaffold protein D"/>
    <property type="match status" value="1"/>
</dbReference>
<dbReference type="InterPro" id="IPR004196">
    <property type="entry name" value="Scaffold_D"/>
</dbReference>
<dbReference type="InterPro" id="IPR036632">
    <property type="entry name" value="Scaffold_D_sf"/>
</dbReference>
<dbReference type="Pfam" id="PF02925">
    <property type="entry name" value="gpD"/>
    <property type="match status" value="1"/>
</dbReference>
<dbReference type="SUPFAM" id="SSF48045">
    <property type="entry name" value="Scaffolding protein gpD of bacteriophage procapsid"/>
    <property type="match status" value="1"/>
</dbReference>
<organism>
    <name type="scientific">Escherichia phage alpha3</name>
    <name type="common">Bacteriophage alpha-3</name>
    <dbReference type="NCBI Taxonomy" id="10849"/>
    <lineage>
        <taxon>Viruses</taxon>
        <taxon>Monodnaviria</taxon>
        <taxon>Sangervirae</taxon>
        <taxon>Phixviricota</taxon>
        <taxon>Malgrandaviricetes</taxon>
        <taxon>Petitvirales</taxon>
        <taxon>Microviridae</taxon>
        <taxon>Bullavirinae</taxon>
        <taxon>Alphatrevirus</taxon>
        <taxon>Alphatrevirus alpha3</taxon>
    </lineage>
</organism>
<gene>
    <name type="primary">D</name>
</gene>